<evidence type="ECO:0000250" key="1"/>
<evidence type="ECO:0000255" key="2"/>
<evidence type="ECO:0000255" key="3">
    <source>
        <dbReference type="PROSITE-ProRule" id="PRU00286"/>
    </source>
</evidence>
<evidence type="ECO:0000256" key="4">
    <source>
        <dbReference type="SAM" id="MobiDB-lite"/>
    </source>
</evidence>
<evidence type="ECO:0000269" key="5">
    <source>
    </source>
</evidence>
<evidence type="ECO:0000269" key="6">
    <source>
    </source>
</evidence>
<evidence type="ECO:0000305" key="7"/>
<evidence type="ECO:0000305" key="8">
    <source>
    </source>
</evidence>
<keyword id="KW-0025">Alternative splicing</keyword>
<keyword id="KW-0143">Chaperone</keyword>
<keyword id="KW-0256">Endoplasmic reticulum</keyword>
<keyword id="KW-0325">Glycoprotein</keyword>
<keyword id="KW-0472">Membrane</keyword>
<keyword id="KW-0653">Protein transport</keyword>
<keyword id="KW-1185">Reference proteome</keyword>
<keyword id="KW-0812">Transmembrane</keyword>
<keyword id="KW-1133">Transmembrane helix</keyword>
<keyword id="KW-0813">Transport</keyword>
<protein>
    <recommendedName>
        <fullName>DnaJ protein ERDJ2A</fullName>
    </recommendedName>
    <alternativeName>
        <fullName>Chaperone protein dnaJ 21</fullName>
        <shortName>AtDjC21</shortName>
        <shortName>AtJ21</shortName>
    </alternativeName>
    <alternativeName>
        <fullName>Endoplasmic reticulum dnaJ domain-containing protein 2A</fullName>
        <shortName>AtERdj2A</shortName>
    </alternativeName>
    <alternativeName>
        <fullName>Translocation protein SEC63 homolog ERDJ2A</fullName>
    </alternativeName>
</protein>
<organism>
    <name type="scientific">Arabidopsis thaliana</name>
    <name type="common">Mouse-ear cress</name>
    <dbReference type="NCBI Taxonomy" id="3702"/>
    <lineage>
        <taxon>Eukaryota</taxon>
        <taxon>Viridiplantae</taxon>
        <taxon>Streptophyta</taxon>
        <taxon>Embryophyta</taxon>
        <taxon>Tracheophyta</taxon>
        <taxon>Spermatophyta</taxon>
        <taxon>Magnoliopsida</taxon>
        <taxon>eudicotyledons</taxon>
        <taxon>Gunneridae</taxon>
        <taxon>Pentapetalae</taxon>
        <taxon>rosids</taxon>
        <taxon>malvids</taxon>
        <taxon>Brassicales</taxon>
        <taxon>Brassicaceae</taxon>
        <taxon>Camelineae</taxon>
        <taxon>Arabidopsis</taxon>
    </lineage>
</organism>
<dbReference type="EMBL" id="AC009322">
    <property type="protein sequence ID" value="AAD55462.1"/>
    <property type="status" value="ALT_SEQ"/>
    <property type="molecule type" value="Genomic_DNA"/>
</dbReference>
<dbReference type="EMBL" id="AC011717">
    <property type="protein sequence ID" value="AAG52236.1"/>
    <property type="status" value="ALT_SEQ"/>
    <property type="molecule type" value="Genomic_DNA"/>
</dbReference>
<dbReference type="EMBL" id="CP002684">
    <property type="protein sequence ID" value="AEE36329.1"/>
    <property type="molecule type" value="Genomic_DNA"/>
</dbReference>
<dbReference type="EMBL" id="CP002684">
    <property type="protein sequence ID" value="AEE36330.1"/>
    <property type="molecule type" value="Genomic_DNA"/>
</dbReference>
<dbReference type="EMBL" id="CP002684">
    <property type="protein sequence ID" value="AEE36331.1"/>
    <property type="molecule type" value="Genomic_DNA"/>
</dbReference>
<dbReference type="EMBL" id="AK227714">
    <property type="protein sequence ID" value="BAE99700.1"/>
    <property type="molecule type" value="mRNA"/>
</dbReference>
<dbReference type="PIR" id="F96830">
    <property type="entry name" value="F96830"/>
</dbReference>
<dbReference type="RefSeq" id="NP_001031306.2">
    <molecule id="Q0WT48-1"/>
    <property type="nucleotide sequence ID" value="NM_001036229.3"/>
</dbReference>
<dbReference type="RefSeq" id="NP_001117623.1">
    <molecule id="Q0WT48-1"/>
    <property type="nucleotide sequence ID" value="NM_001124151.1"/>
</dbReference>
<dbReference type="RefSeq" id="NP_178112.2">
    <molecule id="Q0WT48-1"/>
    <property type="nucleotide sequence ID" value="NM_106643.5"/>
</dbReference>
<dbReference type="BioGRID" id="29552">
    <property type="interactions" value="21"/>
</dbReference>
<dbReference type="FunCoup" id="Q0WT48">
    <property type="interactions" value="4707"/>
</dbReference>
<dbReference type="IntAct" id="Q0WT48">
    <property type="interactions" value="16"/>
</dbReference>
<dbReference type="STRING" id="3702.Q0WT48"/>
<dbReference type="GlyCosmos" id="Q0WT48">
    <property type="glycosylation" value="1 site, No reported glycans"/>
</dbReference>
<dbReference type="GlyGen" id="Q0WT48">
    <property type="glycosylation" value="1 site"/>
</dbReference>
<dbReference type="iPTMnet" id="Q0WT48"/>
<dbReference type="SwissPalm" id="Q0WT48"/>
<dbReference type="PaxDb" id="3702-AT1G79940.3"/>
<dbReference type="ProteomicsDB" id="222084">
    <molecule id="Q0WT48-1"/>
</dbReference>
<dbReference type="EnsemblPlants" id="AT1G79940.1">
    <molecule id="Q0WT48-1"/>
    <property type="protein sequence ID" value="AT1G79940.1"/>
    <property type="gene ID" value="AT1G79940"/>
</dbReference>
<dbReference type="EnsemblPlants" id="AT1G79940.2">
    <molecule id="Q0WT48-1"/>
    <property type="protein sequence ID" value="AT1G79940.2"/>
    <property type="gene ID" value="AT1G79940"/>
</dbReference>
<dbReference type="EnsemblPlants" id="AT1G79940.3">
    <molecule id="Q0WT48-1"/>
    <property type="protein sequence ID" value="AT1G79940.3"/>
    <property type="gene ID" value="AT1G79940"/>
</dbReference>
<dbReference type="GeneID" id="844334"/>
<dbReference type="Gramene" id="AT1G79940.1">
    <molecule id="Q0WT48-1"/>
    <property type="protein sequence ID" value="AT1G79940.1"/>
    <property type="gene ID" value="AT1G79940"/>
</dbReference>
<dbReference type="Gramene" id="AT1G79940.2">
    <molecule id="Q0WT48-1"/>
    <property type="protein sequence ID" value="AT1G79940.2"/>
    <property type="gene ID" value="AT1G79940"/>
</dbReference>
<dbReference type="Gramene" id="AT1G79940.3">
    <molecule id="Q0WT48-1"/>
    <property type="protein sequence ID" value="AT1G79940.3"/>
    <property type="gene ID" value="AT1G79940"/>
</dbReference>
<dbReference type="KEGG" id="ath:AT1G79940"/>
<dbReference type="Araport" id="AT1G79940"/>
<dbReference type="TAIR" id="AT1G79940">
    <property type="gene designation" value="ATERDJ2A"/>
</dbReference>
<dbReference type="eggNOG" id="KOG0721">
    <property type="taxonomic scope" value="Eukaryota"/>
</dbReference>
<dbReference type="eggNOG" id="KOG0951">
    <property type="taxonomic scope" value="Eukaryota"/>
</dbReference>
<dbReference type="InParanoid" id="Q0WT48"/>
<dbReference type="OMA" id="LIPCTYI"/>
<dbReference type="OrthoDB" id="1734229at2759"/>
<dbReference type="PhylomeDB" id="Q0WT48"/>
<dbReference type="CD-CODE" id="4299E36E">
    <property type="entry name" value="Nucleolus"/>
</dbReference>
<dbReference type="PRO" id="PR:Q0WT48"/>
<dbReference type="Proteomes" id="UP000006548">
    <property type="component" value="Chromosome 1"/>
</dbReference>
<dbReference type="ExpressionAtlas" id="Q0WT48">
    <property type="expression patterns" value="baseline and differential"/>
</dbReference>
<dbReference type="GO" id="GO:0005783">
    <property type="term" value="C:endoplasmic reticulum"/>
    <property type="evidence" value="ECO:0007005"/>
    <property type="project" value="TAIR"/>
</dbReference>
<dbReference type="GO" id="GO:0005789">
    <property type="term" value="C:endoplasmic reticulum membrane"/>
    <property type="evidence" value="ECO:0007669"/>
    <property type="project" value="UniProtKB-SubCell"/>
</dbReference>
<dbReference type="GO" id="GO:0005794">
    <property type="term" value="C:Golgi apparatus"/>
    <property type="evidence" value="ECO:0007005"/>
    <property type="project" value="TAIR"/>
</dbReference>
<dbReference type="GO" id="GO:0005739">
    <property type="term" value="C:mitochondrion"/>
    <property type="evidence" value="ECO:0007005"/>
    <property type="project" value="TAIR"/>
</dbReference>
<dbReference type="GO" id="GO:0015031">
    <property type="term" value="P:protein transport"/>
    <property type="evidence" value="ECO:0007669"/>
    <property type="project" value="UniProtKB-KW"/>
</dbReference>
<dbReference type="CDD" id="cd06257">
    <property type="entry name" value="DnaJ"/>
    <property type="match status" value="1"/>
</dbReference>
<dbReference type="FunFam" id="1.10.150.20:FF:000044">
    <property type="entry name" value="DnaJ protein ERDJ2A"/>
    <property type="match status" value="1"/>
</dbReference>
<dbReference type="FunFam" id="1.10.287.110:FF:000038">
    <property type="entry name" value="DnaJ protein ERDJ2A"/>
    <property type="match status" value="1"/>
</dbReference>
<dbReference type="FunFam" id="1.10.3380.10:FF:000007">
    <property type="entry name" value="DnaJ protein ERDJ2A"/>
    <property type="match status" value="1"/>
</dbReference>
<dbReference type="Gene3D" id="1.10.150.20">
    <property type="entry name" value="5' to 3' exonuclease, C-terminal subdomain"/>
    <property type="match status" value="1"/>
</dbReference>
<dbReference type="Gene3D" id="2.60.40.150">
    <property type="entry name" value="C2 domain"/>
    <property type="match status" value="1"/>
</dbReference>
<dbReference type="Gene3D" id="1.10.287.110">
    <property type="entry name" value="DnaJ domain"/>
    <property type="match status" value="1"/>
</dbReference>
<dbReference type="Gene3D" id="1.10.3380.10">
    <property type="entry name" value="Sec63 N-terminal domain-like domain"/>
    <property type="match status" value="1"/>
</dbReference>
<dbReference type="InterPro" id="IPR035892">
    <property type="entry name" value="C2_domain_sf"/>
</dbReference>
<dbReference type="InterPro" id="IPR001623">
    <property type="entry name" value="DnaJ_domain"/>
</dbReference>
<dbReference type="InterPro" id="IPR014756">
    <property type="entry name" value="Ig_E-set"/>
</dbReference>
<dbReference type="InterPro" id="IPR036869">
    <property type="entry name" value="J_dom_sf"/>
</dbReference>
<dbReference type="InterPro" id="IPR004179">
    <property type="entry name" value="Sec63-dom"/>
</dbReference>
<dbReference type="PANTHER" id="PTHR24075">
    <property type="entry name" value="SEC63 DOMAIN-CONTAINING"/>
    <property type="match status" value="1"/>
</dbReference>
<dbReference type="PANTHER" id="PTHR24075:SF0">
    <property type="entry name" value="TRANSLOCATION PROTEIN SEC63 HOMOLOG"/>
    <property type="match status" value="1"/>
</dbReference>
<dbReference type="Pfam" id="PF00226">
    <property type="entry name" value="DnaJ"/>
    <property type="match status" value="1"/>
</dbReference>
<dbReference type="Pfam" id="PF02889">
    <property type="entry name" value="Sec63"/>
    <property type="match status" value="1"/>
</dbReference>
<dbReference type="PRINTS" id="PR00625">
    <property type="entry name" value="JDOMAIN"/>
</dbReference>
<dbReference type="SMART" id="SM00271">
    <property type="entry name" value="DnaJ"/>
    <property type="match status" value="1"/>
</dbReference>
<dbReference type="SMART" id="SM00973">
    <property type="entry name" value="Sec63"/>
    <property type="match status" value="1"/>
</dbReference>
<dbReference type="SUPFAM" id="SSF46565">
    <property type="entry name" value="Chaperone J-domain"/>
    <property type="match status" value="1"/>
</dbReference>
<dbReference type="SUPFAM" id="SSF81296">
    <property type="entry name" value="E set domains"/>
    <property type="match status" value="1"/>
</dbReference>
<dbReference type="SUPFAM" id="SSF158702">
    <property type="entry name" value="Sec63 N-terminal domain-like"/>
    <property type="match status" value="1"/>
</dbReference>
<dbReference type="PROSITE" id="PS50076">
    <property type="entry name" value="DNAJ_2"/>
    <property type="match status" value="1"/>
</dbReference>
<accession>Q0WT48</accession>
<accession>Q9CA96</accession>
<accession>Q9SSD9</accession>
<reference key="1">
    <citation type="journal article" date="2000" name="Nature">
        <title>Sequence and analysis of chromosome 1 of the plant Arabidopsis thaliana.</title>
        <authorList>
            <person name="Theologis A."/>
            <person name="Ecker J.R."/>
            <person name="Palm C.J."/>
            <person name="Federspiel N.A."/>
            <person name="Kaul S."/>
            <person name="White O."/>
            <person name="Alonso J."/>
            <person name="Altafi H."/>
            <person name="Araujo R."/>
            <person name="Bowman C.L."/>
            <person name="Brooks S.Y."/>
            <person name="Buehler E."/>
            <person name="Chan A."/>
            <person name="Chao Q."/>
            <person name="Chen H."/>
            <person name="Cheuk R.F."/>
            <person name="Chin C.W."/>
            <person name="Chung M.K."/>
            <person name="Conn L."/>
            <person name="Conway A.B."/>
            <person name="Conway A.R."/>
            <person name="Creasy T.H."/>
            <person name="Dewar K."/>
            <person name="Dunn P."/>
            <person name="Etgu P."/>
            <person name="Feldblyum T.V."/>
            <person name="Feng J.-D."/>
            <person name="Fong B."/>
            <person name="Fujii C.Y."/>
            <person name="Gill J.E."/>
            <person name="Goldsmith A.D."/>
            <person name="Haas B."/>
            <person name="Hansen N.F."/>
            <person name="Hughes B."/>
            <person name="Huizar L."/>
            <person name="Hunter J.L."/>
            <person name="Jenkins J."/>
            <person name="Johnson-Hopson C."/>
            <person name="Khan S."/>
            <person name="Khaykin E."/>
            <person name="Kim C.J."/>
            <person name="Koo H.L."/>
            <person name="Kremenetskaia I."/>
            <person name="Kurtz D.B."/>
            <person name="Kwan A."/>
            <person name="Lam B."/>
            <person name="Langin-Hooper S."/>
            <person name="Lee A."/>
            <person name="Lee J.M."/>
            <person name="Lenz C.A."/>
            <person name="Li J.H."/>
            <person name="Li Y.-P."/>
            <person name="Lin X."/>
            <person name="Liu S.X."/>
            <person name="Liu Z.A."/>
            <person name="Luros J.S."/>
            <person name="Maiti R."/>
            <person name="Marziali A."/>
            <person name="Militscher J."/>
            <person name="Miranda M."/>
            <person name="Nguyen M."/>
            <person name="Nierman W.C."/>
            <person name="Osborne B.I."/>
            <person name="Pai G."/>
            <person name="Peterson J."/>
            <person name="Pham P.K."/>
            <person name="Rizzo M."/>
            <person name="Rooney T."/>
            <person name="Rowley D."/>
            <person name="Sakano H."/>
            <person name="Salzberg S.L."/>
            <person name="Schwartz J.R."/>
            <person name="Shinn P."/>
            <person name="Southwick A.M."/>
            <person name="Sun H."/>
            <person name="Tallon L.J."/>
            <person name="Tambunga G."/>
            <person name="Toriumi M.J."/>
            <person name="Town C.D."/>
            <person name="Utterback T."/>
            <person name="Van Aken S."/>
            <person name="Vaysberg M."/>
            <person name="Vysotskaia V.S."/>
            <person name="Walker M."/>
            <person name="Wu D."/>
            <person name="Yu G."/>
            <person name="Fraser C.M."/>
            <person name="Venter J.C."/>
            <person name="Davis R.W."/>
        </authorList>
    </citation>
    <scope>NUCLEOTIDE SEQUENCE [LARGE SCALE GENOMIC DNA]</scope>
    <source>
        <strain>cv. Columbia</strain>
    </source>
</reference>
<reference key="2">
    <citation type="journal article" date="2017" name="Plant J.">
        <title>Araport11: a complete reannotation of the Arabidopsis thaliana reference genome.</title>
        <authorList>
            <person name="Cheng C.Y."/>
            <person name="Krishnakumar V."/>
            <person name="Chan A.P."/>
            <person name="Thibaud-Nissen F."/>
            <person name="Schobel S."/>
            <person name="Town C.D."/>
        </authorList>
    </citation>
    <scope>GENOME REANNOTATION</scope>
    <source>
        <strain>cv. Columbia</strain>
    </source>
</reference>
<reference key="3">
    <citation type="submission" date="2006-07" db="EMBL/GenBank/DDBJ databases">
        <title>Large-scale analysis of RIKEN Arabidopsis full-length (RAFL) cDNAs.</title>
        <authorList>
            <person name="Totoki Y."/>
            <person name="Seki M."/>
            <person name="Ishida J."/>
            <person name="Nakajima M."/>
            <person name="Enju A."/>
            <person name="Kamiya A."/>
            <person name="Narusaka M."/>
            <person name="Shin-i T."/>
            <person name="Nakagawa M."/>
            <person name="Sakamoto N."/>
            <person name="Oishi K."/>
            <person name="Kohara Y."/>
            <person name="Kobayashi M."/>
            <person name="Toyoda A."/>
            <person name="Sakaki Y."/>
            <person name="Sakurai T."/>
            <person name="Iida K."/>
            <person name="Akiyama K."/>
            <person name="Satou M."/>
            <person name="Toyoda T."/>
            <person name="Konagaya A."/>
            <person name="Carninci P."/>
            <person name="Kawai J."/>
            <person name="Hayashizaki Y."/>
            <person name="Shinozaki K."/>
        </authorList>
    </citation>
    <scope>NUCLEOTIDE SEQUENCE [LARGE SCALE MRNA]</scope>
    <source>
        <strain>cv. Columbia</strain>
    </source>
</reference>
<reference key="4">
    <citation type="journal article" date="2001" name="Cell Stress Chaperones">
        <title>The J-domain proteins of Arabidopsis thaliana: an unexpectedly large and diverse family of chaperones.</title>
        <authorList>
            <person name="Miernyk J.A."/>
        </authorList>
    </citation>
    <scope>GENE FAMILY</scope>
    <scope>NOMENCLATURE</scope>
</reference>
<reference key="5">
    <citation type="journal article" date="2008" name="Plant Cell Physiol.">
        <title>Arabidopsis thaliana has a set of J proteins in the endoplasmic reticulum that are conserved from yeast to animals and plants.</title>
        <authorList>
            <person name="Yamamoto M."/>
            <person name="Maruyama D."/>
            <person name="Endo T."/>
            <person name="Nishikawa S."/>
        </authorList>
    </citation>
    <scope>SUBCELLULAR LOCATION</scope>
    <scope>TISSUE SPECIFICITY</scope>
    <scope>INDUCTION BY TUNICAMYCIN</scope>
    <scope>DISRUPTION PHENOTYPE</scope>
</reference>
<reference key="6">
    <citation type="journal article" date="2012" name="J. Cell Sci.">
        <title>AtTPR7 is a chaperone-docking protein of the Sec translocon in Arabidopsis.</title>
        <authorList>
            <person name="Schweiger R."/>
            <person name="Muller N.C."/>
            <person name="Schmitt M.J."/>
            <person name="Soll J."/>
            <person name="Schwenkert S."/>
        </authorList>
    </citation>
    <scope>INTERACTION WITH OEP61/TPR7</scope>
</reference>
<proteinExistence type="evidence at protein level"/>
<name>DNJ21_ARATH</name>
<comment type="function">
    <text evidence="1">Required for integral membrane and secreted preprotein translocation across the endoplasmic reticulum membrane.</text>
</comment>
<comment type="subunit">
    <text evidence="6">Interacts with OEP61/TPR7.</text>
</comment>
<comment type="subcellular location">
    <subcellularLocation>
        <location evidence="8">Endoplasmic reticulum membrane</location>
        <topology evidence="8">Multi-pass membrane protein</topology>
    </subcellularLocation>
</comment>
<comment type="alternative products">
    <event type="alternative splicing"/>
    <isoform>
        <id>Q0WT48-1</id>
        <name>1</name>
        <sequence type="displayed"/>
    </isoform>
    <text>A number of isoforms are produced. According to EST sequences.</text>
</comment>
<comment type="tissue specificity">
    <text evidence="5">Expressed in leaves, flower buds and flowers.</text>
</comment>
<comment type="induction">
    <text evidence="5">By tunicamycin.</text>
</comment>
<comment type="disruption phenotype">
    <text evidence="5">Male gametophytic lethal due to defect in pollen germination and pollen tube growth.</text>
</comment>
<comment type="sequence caution" evidence="7">
    <conflict type="erroneous gene model prediction">
        <sequence resource="EMBL-CDS" id="AAD55462"/>
    </conflict>
</comment>
<comment type="sequence caution" evidence="7">
    <conflict type="erroneous gene model prediction">
        <sequence resource="EMBL-CDS" id="AAG52236"/>
    </conflict>
</comment>
<gene>
    <name type="primary">ERDJ2A</name>
    <name type="synonym">C21</name>
    <name type="ordered locus">At1g79940</name>
    <name type="ORF">F18B13.2</name>
    <name type="ORF">F19K16.10</name>
</gene>
<sequence>MAASEENSALFPIFILTIMAIPLVPYTMVKLSGALSKKQRTIHCQCLECDRSGKYKRSLFKKISNFSTWSNLTLVLLWVVMIFLIYYTKNMSREAQVFDPFSILGLEPGVTDSEIKKAYRRLSIQYHPDKNPDPEANKYFVEFISKAYQALTDSVSRENFEKYGHPDGRQGFQMGIALPQFLLDIDGASGGILLLWIVGVCILLPLVIAVIYLSRSSKYTGNYVMHQTLSAYYYLMKPSLAPSKVMEVFTKAAEYMEIPVRRTDDEPLQKLFMSVRSELNLDLKNMKQEQAKFWKQHPAIVKTELLIQAQLTRESGVLSPALQGDFRRVLELAPRLLEELLKMAVIPRTAQGHGWLRPAVGVVELSQCIVQAVPLSARKSSGVSSEGISPFLQLPHFSDAVVKKIARKKVKSFQDLQEMRLEDRSELLTQVAGLSATDVEDIEKVLEMMPSITVDITCETEGEEGIQEGDIVTLQAWVTLKRPNGLVGALPHAPYFPFHKEENYWVLLADSVSNNVWFSQKVSFLDEGGAITAASKAISESMEGSGAGVKETNDAVREAIEKVKGGSRLVMGKLQAPAEGTYNLTCFCLCDTWIGCDKKQALKVKVLKRTRAGTRGLVSDEGAIAEEGMEEEDEIEEEDYDDDYESEYSEDEDEKKDMDEKRGSKKANGSVKQKKESSSEESGSEEE</sequence>
<feature type="chain" id="PRO_0000430364" description="DnaJ protein ERDJ2A">
    <location>
        <begin position="1"/>
        <end position="687"/>
    </location>
</feature>
<feature type="topological domain" description="Lumenal" evidence="2">
    <location>
        <begin position="1"/>
        <end position="8"/>
    </location>
</feature>
<feature type="transmembrane region" description="Helical; Name=1" evidence="2">
    <location>
        <begin position="9"/>
        <end position="29"/>
    </location>
</feature>
<feature type="topological domain" description="Cytoplasmic" evidence="2">
    <location>
        <begin position="30"/>
        <end position="65"/>
    </location>
</feature>
<feature type="transmembrane region" description="Helical; Name=2" evidence="2">
    <location>
        <begin position="66"/>
        <end position="86"/>
    </location>
</feature>
<feature type="topological domain" description="Lumenal" evidence="2">
    <location>
        <begin position="87"/>
        <end position="190"/>
    </location>
</feature>
<feature type="transmembrane region" description="Helical; Name=3" evidence="2">
    <location>
        <begin position="191"/>
        <end position="211"/>
    </location>
</feature>
<feature type="topological domain" description="Cytoplasmic" evidence="2">
    <location>
        <begin position="212"/>
        <end position="687"/>
    </location>
</feature>
<feature type="domain" description="J" evidence="3">
    <location>
        <begin position="99"/>
        <end position="164"/>
    </location>
</feature>
<feature type="domain" description="SEC63">
    <location>
        <begin position="205"/>
        <end position="603"/>
    </location>
</feature>
<feature type="region of interest" description="Disordered" evidence="4">
    <location>
        <begin position="619"/>
        <end position="687"/>
    </location>
</feature>
<feature type="compositionally biased region" description="Acidic residues" evidence="4">
    <location>
        <begin position="623"/>
        <end position="654"/>
    </location>
</feature>
<feature type="glycosylation site" description="N-linked (GlcNAc...) asparagine" evidence="2">
    <location>
        <position position="90"/>
    </location>
</feature>